<organism>
    <name type="scientific">Desulforamulus reducens (strain ATCC BAA-1160 / DSM 100696 / MI-1)</name>
    <name type="common">Desulfotomaculum reducens</name>
    <dbReference type="NCBI Taxonomy" id="349161"/>
    <lineage>
        <taxon>Bacteria</taxon>
        <taxon>Bacillati</taxon>
        <taxon>Bacillota</taxon>
        <taxon>Clostridia</taxon>
        <taxon>Eubacteriales</taxon>
        <taxon>Peptococcaceae</taxon>
        <taxon>Desulforamulus</taxon>
    </lineage>
</organism>
<accession>A4J4I2</accession>
<proteinExistence type="inferred from homology"/>
<dbReference type="EC" id="2.7.7.27" evidence="1"/>
<dbReference type="EMBL" id="CP000612">
    <property type="protein sequence ID" value="ABO49985.1"/>
    <property type="molecule type" value="Genomic_DNA"/>
</dbReference>
<dbReference type="RefSeq" id="WP_011877801.1">
    <property type="nucleotide sequence ID" value="NC_009253.1"/>
</dbReference>
<dbReference type="SMR" id="A4J4I2"/>
<dbReference type="STRING" id="349161.Dred_1455"/>
<dbReference type="KEGG" id="drm:Dred_1455"/>
<dbReference type="eggNOG" id="COG0448">
    <property type="taxonomic scope" value="Bacteria"/>
</dbReference>
<dbReference type="HOGENOM" id="CLU_029499_14_0_9"/>
<dbReference type="OrthoDB" id="9801810at2"/>
<dbReference type="UniPathway" id="UPA00164"/>
<dbReference type="Proteomes" id="UP000001556">
    <property type="component" value="Chromosome"/>
</dbReference>
<dbReference type="GO" id="GO:0005524">
    <property type="term" value="F:ATP binding"/>
    <property type="evidence" value="ECO:0007669"/>
    <property type="project" value="UniProtKB-KW"/>
</dbReference>
<dbReference type="GO" id="GO:0008878">
    <property type="term" value="F:glucose-1-phosphate adenylyltransferase activity"/>
    <property type="evidence" value="ECO:0007669"/>
    <property type="project" value="UniProtKB-UniRule"/>
</dbReference>
<dbReference type="GO" id="GO:0005978">
    <property type="term" value="P:glycogen biosynthetic process"/>
    <property type="evidence" value="ECO:0007669"/>
    <property type="project" value="UniProtKB-UniRule"/>
</dbReference>
<dbReference type="CDD" id="cd02508">
    <property type="entry name" value="ADP_Glucose_PP"/>
    <property type="match status" value="1"/>
</dbReference>
<dbReference type="CDD" id="cd04651">
    <property type="entry name" value="LbH_G1P_AT_C"/>
    <property type="match status" value="1"/>
</dbReference>
<dbReference type="Gene3D" id="2.160.10.10">
    <property type="entry name" value="Hexapeptide repeat proteins"/>
    <property type="match status" value="1"/>
</dbReference>
<dbReference type="Gene3D" id="3.90.550.10">
    <property type="entry name" value="Spore Coat Polysaccharide Biosynthesis Protein SpsA, Chain A"/>
    <property type="match status" value="1"/>
</dbReference>
<dbReference type="HAMAP" id="MF_00624">
    <property type="entry name" value="GlgC"/>
    <property type="match status" value="1"/>
</dbReference>
<dbReference type="InterPro" id="IPR011831">
    <property type="entry name" value="ADP-Glc_PPase"/>
</dbReference>
<dbReference type="InterPro" id="IPR005836">
    <property type="entry name" value="ADP_Glu_pyroP_CS"/>
</dbReference>
<dbReference type="InterPro" id="IPR023049">
    <property type="entry name" value="GlgC_bac"/>
</dbReference>
<dbReference type="InterPro" id="IPR056818">
    <property type="entry name" value="GlmU/GlgC-like_hexapep"/>
</dbReference>
<dbReference type="InterPro" id="IPR005835">
    <property type="entry name" value="NTP_transferase_dom"/>
</dbReference>
<dbReference type="InterPro" id="IPR029044">
    <property type="entry name" value="Nucleotide-diphossugar_trans"/>
</dbReference>
<dbReference type="InterPro" id="IPR011004">
    <property type="entry name" value="Trimer_LpxA-like_sf"/>
</dbReference>
<dbReference type="NCBIfam" id="TIGR02091">
    <property type="entry name" value="glgC"/>
    <property type="match status" value="1"/>
</dbReference>
<dbReference type="NCBIfam" id="NF003670">
    <property type="entry name" value="PRK05293.1"/>
    <property type="match status" value="1"/>
</dbReference>
<dbReference type="PANTHER" id="PTHR43523:SF2">
    <property type="entry name" value="GLUCOSE-1-PHOSPHATE ADENYLYLTRANSFERASE"/>
    <property type="match status" value="1"/>
</dbReference>
<dbReference type="PANTHER" id="PTHR43523">
    <property type="entry name" value="GLUCOSE-1-PHOSPHATE ADENYLYLTRANSFERASE-RELATED"/>
    <property type="match status" value="1"/>
</dbReference>
<dbReference type="Pfam" id="PF24894">
    <property type="entry name" value="Hexapep_GlmU"/>
    <property type="match status" value="1"/>
</dbReference>
<dbReference type="Pfam" id="PF00483">
    <property type="entry name" value="NTP_transferase"/>
    <property type="match status" value="1"/>
</dbReference>
<dbReference type="SUPFAM" id="SSF53448">
    <property type="entry name" value="Nucleotide-diphospho-sugar transferases"/>
    <property type="match status" value="1"/>
</dbReference>
<dbReference type="SUPFAM" id="SSF51161">
    <property type="entry name" value="Trimeric LpxA-like enzymes"/>
    <property type="match status" value="1"/>
</dbReference>
<dbReference type="PROSITE" id="PS00808">
    <property type="entry name" value="ADP_GLC_PYROPHOSPH_1"/>
    <property type="match status" value="1"/>
</dbReference>
<dbReference type="PROSITE" id="PS00809">
    <property type="entry name" value="ADP_GLC_PYROPHOSPH_2"/>
    <property type="match status" value="1"/>
</dbReference>
<dbReference type="PROSITE" id="PS00810">
    <property type="entry name" value="ADP_GLC_PYROPHOSPH_3"/>
    <property type="match status" value="1"/>
</dbReference>
<name>GLGC_DESRM</name>
<reference key="1">
    <citation type="submission" date="2007-03" db="EMBL/GenBank/DDBJ databases">
        <title>Complete sequence of Desulfotomaculum reducens MI-1.</title>
        <authorList>
            <consortium name="US DOE Joint Genome Institute"/>
            <person name="Copeland A."/>
            <person name="Lucas S."/>
            <person name="Lapidus A."/>
            <person name="Barry K."/>
            <person name="Detter J.C."/>
            <person name="Glavina del Rio T."/>
            <person name="Hammon N."/>
            <person name="Israni S."/>
            <person name="Dalin E."/>
            <person name="Tice H."/>
            <person name="Pitluck S."/>
            <person name="Sims D."/>
            <person name="Brettin T."/>
            <person name="Bruce D."/>
            <person name="Han C."/>
            <person name="Tapia R."/>
            <person name="Schmutz J."/>
            <person name="Larimer F."/>
            <person name="Land M."/>
            <person name="Hauser L."/>
            <person name="Kyrpides N."/>
            <person name="Kim E."/>
            <person name="Tebo B.M."/>
            <person name="Richardson P."/>
        </authorList>
    </citation>
    <scope>NUCLEOTIDE SEQUENCE [LARGE SCALE GENOMIC DNA]</scope>
    <source>
        <strain>ATCC BAA-1160 / DSM 100696 / MI-1</strain>
    </source>
</reference>
<comment type="function">
    <text evidence="1">Involved in the biosynthesis of ADP-glucose, a building block required for the elongation reactions to produce glycogen. Catalyzes the reaction between ATP and alpha-D-glucose 1-phosphate (G1P) to produce pyrophosphate and ADP-Glc.</text>
</comment>
<comment type="catalytic activity">
    <reaction evidence="1">
        <text>alpha-D-glucose 1-phosphate + ATP + H(+) = ADP-alpha-D-glucose + diphosphate</text>
        <dbReference type="Rhea" id="RHEA:12120"/>
        <dbReference type="ChEBI" id="CHEBI:15378"/>
        <dbReference type="ChEBI" id="CHEBI:30616"/>
        <dbReference type="ChEBI" id="CHEBI:33019"/>
        <dbReference type="ChEBI" id="CHEBI:57498"/>
        <dbReference type="ChEBI" id="CHEBI:58601"/>
        <dbReference type="EC" id="2.7.7.27"/>
    </reaction>
</comment>
<comment type="pathway">
    <text evidence="1">Glycan biosynthesis; glycogen biosynthesis.</text>
</comment>
<comment type="subunit">
    <text evidence="1">Homotetramer.</text>
</comment>
<comment type="similarity">
    <text evidence="1">Belongs to the bacterial/plant glucose-1-phosphate adenylyltransferase family.</text>
</comment>
<sequence>MQRKECVAMLLAGGQGSRLGVLTKKLAKPAVPFGGRYRIIDFTLSNCNNSGFDTVGVLTQYQPLALNTYIGIGSHWDLDRKNGGVTVLPPFVKEMGGEWYKGTANAIYQNIEFVDQYKPKYILILSGDHIYKMDYSLMLDFHKEKQADATIAVIEVPWQEASGFGIMNTAKDARIVEFEEKPKVPRSNLASMGVYIFNWELLKAYLEEDERNPRSSNDFGKNIIPLMLEAGQRMFAYPFKGYWRDVGTIESLWQANMDLLLENPKLDLNDQKWRIYSVTPHQPPQYVAPSARVNCSLINEGCMVFGNVYHSILFPGVDIGKGSTIRESVILSNVKIGKNVIVERAIVGVETIIEDNCHIGCKENSCPEDCSRITVVEGNIIVPTGSFIKKDCQLVGKAG</sequence>
<feature type="chain" id="PRO_1000130474" description="Glucose-1-phosphate adenylyltransferase">
    <location>
        <begin position="1"/>
        <end position="399"/>
    </location>
</feature>
<feature type="binding site" evidence="1">
    <location>
        <position position="100"/>
    </location>
    <ligand>
        <name>alpha-D-glucose 1-phosphate</name>
        <dbReference type="ChEBI" id="CHEBI:58601"/>
    </ligand>
</feature>
<feature type="binding site" evidence="1">
    <location>
        <position position="165"/>
    </location>
    <ligand>
        <name>alpha-D-glucose 1-phosphate</name>
        <dbReference type="ChEBI" id="CHEBI:58601"/>
    </ligand>
</feature>
<feature type="binding site" evidence="1">
    <location>
        <begin position="180"/>
        <end position="181"/>
    </location>
    <ligand>
        <name>alpha-D-glucose 1-phosphate</name>
        <dbReference type="ChEBI" id="CHEBI:58601"/>
    </ligand>
</feature>
<feature type="binding site" evidence="1">
    <location>
        <position position="191"/>
    </location>
    <ligand>
        <name>alpha-D-glucose 1-phosphate</name>
        <dbReference type="ChEBI" id="CHEBI:58601"/>
    </ligand>
</feature>
<keyword id="KW-0067">ATP-binding</keyword>
<keyword id="KW-0119">Carbohydrate metabolism</keyword>
<keyword id="KW-0320">Glycogen biosynthesis</keyword>
<keyword id="KW-0321">Glycogen metabolism</keyword>
<keyword id="KW-0547">Nucleotide-binding</keyword>
<keyword id="KW-0548">Nucleotidyltransferase</keyword>
<keyword id="KW-1185">Reference proteome</keyword>
<keyword id="KW-0808">Transferase</keyword>
<gene>
    <name evidence="1" type="primary">glgC</name>
    <name type="ordered locus">Dred_1455</name>
</gene>
<protein>
    <recommendedName>
        <fullName evidence="1">Glucose-1-phosphate adenylyltransferase</fullName>
        <ecNumber evidence="1">2.7.7.27</ecNumber>
    </recommendedName>
    <alternativeName>
        <fullName evidence="1">ADP-glucose pyrophosphorylase</fullName>
        <shortName evidence="1">ADPGlc PPase</shortName>
    </alternativeName>
    <alternativeName>
        <fullName evidence="1">ADP-glucose synthase</fullName>
    </alternativeName>
</protein>
<evidence type="ECO:0000255" key="1">
    <source>
        <dbReference type="HAMAP-Rule" id="MF_00624"/>
    </source>
</evidence>